<protein>
    <recommendedName>
        <fullName evidence="1">UPF0306 protein YhbP</fullName>
    </recommendedName>
</protein>
<feature type="chain" id="PRO_1000046778" description="UPF0306 protein YhbP">
    <location>
        <begin position="1"/>
        <end position="147"/>
    </location>
</feature>
<evidence type="ECO:0000255" key="1">
    <source>
        <dbReference type="HAMAP-Rule" id="MF_00764"/>
    </source>
</evidence>
<dbReference type="EMBL" id="CP000243">
    <property type="protein sequence ID" value="ABE09027.1"/>
    <property type="molecule type" value="Genomic_DNA"/>
</dbReference>
<dbReference type="RefSeq" id="WP_000449450.1">
    <property type="nucleotide sequence ID" value="NZ_CP064825.1"/>
</dbReference>
<dbReference type="SMR" id="Q1R6I7"/>
<dbReference type="KEGG" id="eci:UTI89_C3581"/>
<dbReference type="HOGENOM" id="CLU_105087_3_0_6"/>
<dbReference type="Proteomes" id="UP000001952">
    <property type="component" value="Chromosome"/>
</dbReference>
<dbReference type="FunFam" id="2.30.110.10:FF:000003">
    <property type="entry name" value="UPF0306 protein YhbP"/>
    <property type="match status" value="1"/>
</dbReference>
<dbReference type="Gene3D" id="2.30.110.10">
    <property type="entry name" value="Electron Transport, Fmn-binding Protein, Chain A"/>
    <property type="match status" value="1"/>
</dbReference>
<dbReference type="HAMAP" id="MF_00764">
    <property type="entry name" value="UPF0306"/>
    <property type="match status" value="1"/>
</dbReference>
<dbReference type="InterPro" id="IPR012349">
    <property type="entry name" value="Split_barrel_FMN-bd"/>
</dbReference>
<dbReference type="InterPro" id="IPR011194">
    <property type="entry name" value="UPF0306"/>
</dbReference>
<dbReference type="NCBIfam" id="NF002900">
    <property type="entry name" value="PRK03467.1"/>
    <property type="match status" value="1"/>
</dbReference>
<dbReference type="PIRSF" id="PIRSF009554">
    <property type="entry name" value="UCP009554"/>
    <property type="match status" value="1"/>
</dbReference>
<dbReference type="SUPFAM" id="SSF50475">
    <property type="entry name" value="FMN-binding split barrel"/>
    <property type="match status" value="1"/>
</dbReference>
<accession>Q1R6I7</accession>
<name>YHBP_ECOUT</name>
<reference key="1">
    <citation type="journal article" date="2006" name="Proc. Natl. Acad. Sci. U.S.A.">
        <title>Identification of genes subject to positive selection in uropathogenic strains of Escherichia coli: a comparative genomics approach.</title>
        <authorList>
            <person name="Chen S.L."/>
            <person name="Hung C.-S."/>
            <person name="Xu J."/>
            <person name="Reigstad C.S."/>
            <person name="Magrini V."/>
            <person name="Sabo A."/>
            <person name="Blasiar D."/>
            <person name="Bieri T."/>
            <person name="Meyer R.R."/>
            <person name="Ozersky P."/>
            <person name="Armstrong J.R."/>
            <person name="Fulton R.S."/>
            <person name="Latreille J.P."/>
            <person name="Spieth J."/>
            <person name="Hooton T.M."/>
            <person name="Mardis E.R."/>
            <person name="Hultgren S.J."/>
            <person name="Gordon J.I."/>
        </authorList>
    </citation>
    <scope>NUCLEOTIDE SEQUENCE [LARGE SCALE GENOMIC DNA]</scope>
    <source>
        <strain>UTI89 / UPEC</strain>
    </source>
</reference>
<sequence>METLTAISRWLAKQHVVTWCVQQEGELWCANAFYLFDAQKVAFYILTEEKTRHAQMSGPQAAIAGTVNGQPKTVALIRGVQFKGEIRRLEGEESDLARKAYNRRFPVARMLSAPVWEIRLDEIKFTDNTLGFGKKMIWLRNSGTEQA</sequence>
<comment type="similarity">
    <text evidence="1">Belongs to the UPF0306 family.</text>
</comment>
<organism>
    <name type="scientific">Escherichia coli (strain UTI89 / UPEC)</name>
    <dbReference type="NCBI Taxonomy" id="364106"/>
    <lineage>
        <taxon>Bacteria</taxon>
        <taxon>Pseudomonadati</taxon>
        <taxon>Pseudomonadota</taxon>
        <taxon>Gammaproteobacteria</taxon>
        <taxon>Enterobacterales</taxon>
        <taxon>Enterobacteriaceae</taxon>
        <taxon>Escherichia</taxon>
    </lineage>
</organism>
<gene>
    <name evidence="1" type="primary">yhbP</name>
    <name type="ordered locus">UTI89_C3581</name>
</gene>
<proteinExistence type="inferred from homology"/>